<keyword id="KW-0067">ATP-binding</keyword>
<keyword id="KW-0238">DNA-binding</keyword>
<keyword id="KW-0479">Metal-binding</keyword>
<keyword id="KW-0547">Nucleotide-binding</keyword>
<keyword id="KW-0678">Repressor</keyword>
<keyword id="KW-0804">Transcription</keyword>
<keyword id="KW-0805">Transcription regulation</keyword>
<keyword id="KW-0862">Zinc</keyword>
<keyword id="KW-0863">Zinc-finger</keyword>
<comment type="function">
    <text evidence="1">Negatively regulates transcription of bacterial ribonucleotide reductase nrd genes and operons by binding to NrdR-boxes.</text>
</comment>
<comment type="cofactor">
    <cofactor evidence="1">
        <name>Zn(2+)</name>
        <dbReference type="ChEBI" id="CHEBI:29105"/>
    </cofactor>
    <text evidence="1">Binds 1 zinc ion.</text>
</comment>
<comment type="similarity">
    <text evidence="1">Belongs to the NrdR family.</text>
</comment>
<comment type="sequence caution" evidence="2">
    <conflict type="erroneous initiation">
        <sequence resource="EMBL-CDS" id="BAC93624"/>
    </conflict>
</comment>
<proteinExistence type="inferred from homology"/>
<sequence>MHCPFCSENDTKVIDSRLVADGHQVRRRRQCLACNERFTTFETAELLMPKVIKSNGNREPFNEDKMVGGIQRALEKRPVSADAIELAISMIKSKLRATGEREVPSKMIGNLVMEQLKHLDKVAYIRFASVYRSFEDIREFGEEIARLED</sequence>
<feature type="chain" id="PRO_0000182380" description="Transcriptional repressor NrdR">
    <location>
        <begin position="1"/>
        <end position="149"/>
    </location>
</feature>
<feature type="domain" description="ATP-cone" evidence="1">
    <location>
        <begin position="49"/>
        <end position="139"/>
    </location>
</feature>
<feature type="zinc finger region" evidence="1">
    <location>
        <begin position="3"/>
        <end position="34"/>
    </location>
</feature>
<reference key="1">
    <citation type="journal article" date="2003" name="Genome Res.">
        <title>Comparative genome analysis of Vibrio vulnificus, a marine pathogen.</title>
        <authorList>
            <person name="Chen C.-Y."/>
            <person name="Wu K.-M."/>
            <person name="Chang Y.-C."/>
            <person name="Chang C.-H."/>
            <person name="Tsai H.-C."/>
            <person name="Liao T.-L."/>
            <person name="Liu Y.-M."/>
            <person name="Chen H.-J."/>
            <person name="Shen A.B.-T."/>
            <person name="Li J.-C."/>
            <person name="Su T.-L."/>
            <person name="Shao C.-P."/>
            <person name="Lee C.-T."/>
            <person name="Hor L.-I."/>
            <person name="Tsai S.-F."/>
        </authorList>
    </citation>
    <scope>NUCLEOTIDE SEQUENCE [LARGE SCALE GENOMIC DNA]</scope>
    <source>
        <strain>YJ016</strain>
    </source>
</reference>
<organism>
    <name type="scientific">Vibrio vulnificus (strain YJ016)</name>
    <dbReference type="NCBI Taxonomy" id="196600"/>
    <lineage>
        <taxon>Bacteria</taxon>
        <taxon>Pseudomonadati</taxon>
        <taxon>Pseudomonadota</taxon>
        <taxon>Gammaproteobacteria</taxon>
        <taxon>Vibrionales</taxon>
        <taxon>Vibrionaceae</taxon>
        <taxon>Vibrio</taxon>
    </lineage>
</organism>
<name>NRDR_VIBVY</name>
<protein>
    <recommendedName>
        <fullName evidence="1">Transcriptional repressor NrdR</fullName>
    </recommendedName>
</protein>
<accession>Q7MN57</accession>
<gene>
    <name evidence="1" type="primary">nrdR</name>
    <name type="ordered locus">VV0860</name>
</gene>
<dbReference type="EMBL" id="BA000037">
    <property type="protein sequence ID" value="BAC93624.1"/>
    <property type="status" value="ALT_INIT"/>
    <property type="molecule type" value="Genomic_DNA"/>
</dbReference>
<dbReference type="RefSeq" id="WP_011149678.1">
    <property type="nucleotide sequence ID" value="NC_005139.1"/>
</dbReference>
<dbReference type="SMR" id="Q7MN57"/>
<dbReference type="STRING" id="672.VV93_v1c07990"/>
<dbReference type="GeneID" id="95679344"/>
<dbReference type="KEGG" id="vvy:VV0860"/>
<dbReference type="eggNOG" id="COG1327">
    <property type="taxonomic scope" value="Bacteria"/>
</dbReference>
<dbReference type="HOGENOM" id="CLU_108412_0_1_6"/>
<dbReference type="Proteomes" id="UP000002675">
    <property type="component" value="Chromosome I"/>
</dbReference>
<dbReference type="GO" id="GO:0005524">
    <property type="term" value="F:ATP binding"/>
    <property type="evidence" value="ECO:0007669"/>
    <property type="project" value="UniProtKB-KW"/>
</dbReference>
<dbReference type="GO" id="GO:0003677">
    <property type="term" value="F:DNA binding"/>
    <property type="evidence" value="ECO:0007669"/>
    <property type="project" value="UniProtKB-KW"/>
</dbReference>
<dbReference type="GO" id="GO:0008270">
    <property type="term" value="F:zinc ion binding"/>
    <property type="evidence" value="ECO:0007669"/>
    <property type="project" value="UniProtKB-UniRule"/>
</dbReference>
<dbReference type="GO" id="GO:0045892">
    <property type="term" value="P:negative regulation of DNA-templated transcription"/>
    <property type="evidence" value="ECO:0007669"/>
    <property type="project" value="UniProtKB-UniRule"/>
</dbReference>
<dbReference type="HAMAP" id="MF_00440">
    <property type="entry name" value="NrdR"/>
    <property type="match status" value="1"/>
</dbReference>
<dbReference type="InterPro" id="IPR005144">
    <property type="entry name" value="ATP-cone_dom"/>
</dbReference>
<dbReference type="InterPro" id="IPR055173">
    <property type="entry name" value="NrdR-like_N"/>
</dbReference>
<dbReference type="InterPro" id="IPR003796">
    <property type="entry name" value="RNR_NrdR-like"/>
</dbReference>
<dbReference type="NCBIfam" id="TIGR00244">
    <property type="entry name" value="transcriptional regulator NrdR"/>
    <property type="match status" value="1"/>
</dbReference>
<dbReference type="PANTHER" id="PTHR30455">
    <property type="entry name" value="TRANSCRIPTIONAL REPRESSOR NRDR"/>
    <property type="match status" value="1"/>
</dbReference>
<dbReference type="PANTHER" id="PTHR30455:SF2">
    <property type="entry name" value="TRANSCRIPTIONAL REPRESSOR NRDR"/>
    <property type="match status" value="1"/>
</dbReference>
<dbReference type="Pfam" id="PF03477">
    <property type="entry name" value="ATP-cone"/>
    <property type="match status" value="1"/>
</dbReference>
<dbReference type="Pfam" id="PF22811">
    <property type="entry name" value="Zn_ribbon_NrdR"/>
    <property type="match status" value="1"/>
</dbReference>
<dbReference type="PROSITE" id="PS51161">
    <property type="entry name" value="ATP_CONE"/>
    <property type="match status" value="1"/>
</dbReference>
<evidence type="ECO:0000255" key="1">
    <source>
        <dbReference type="HAMAP-Rule" id="MF_00440"/>
    </source>
</evidence>
<evidence type="ECO:0000305" key="2"/>